<accession>P21477</accession>
<name>RS20_BACSU</name>
<comment type="function">
    <text>Binds directly to 16S ribosomal RNA.</text>
</comment>
<comment type="subunit">
    <text evidence="1">Part of the 30S ribosomal subunit.</text>
</comment>
<comment type="similarity">
    <text evidence="3">Belongs to the bacterial ribosomal protein bS20 family.</text>
</comment>
<evidence type="ECO:0000269" key="1">
    <source>
    </source>
</evidence>
<evidence type="ECO:0000269" key="2">
    <source>
    </source>
</evidence>
<evidence type="ECO:0000305" key="3"/>
<evidence type="ECO:0007744" key="4">
    <source>
        <dbReference type="PDB" id="6HA1"/>
    </source>
</evidence>
<evidence type="ECO:0007744" key="5">
    <source>
        <dbReference type="PDB" id="6HA8"/>
    </source>
</evidence>
<evidence type="ECO:0007829" key="6">
    <source>
        <dbReference type="PDB" id="8CDU"/>
    </source>
</evidence>
<feature type="initiator methionine" description="Removed" evidence="2">
    <location>
        <position position="1"/>
    </location>
</feature>
<feature type="chain" id="PRO_0000167920" description="Small ribosomal subunit protein bS20">
    <location>
        <begin position="2"/>
        <end position="88"/>
    </location>
</feature>
<feature type="sequence conflict" description="In Ref. 1; BAA12456." evidence="3" ref="1">
    <original>R</original>
    <variation>G</variation>
    <location>
        <position position="18"/>
    </location>
</feature>
<feature type="helix" evidence="6">
    <location>
        <begin position="5"/>
        <end position="41"/>
    </location>
</feature>
<feature type="helix" evidence="6">
    <location>
        <begin position="44"/>
        <end position="63"/>
    </location>
</feature>
<feature type="helix" evidence="6">
    <location>
        <begin position="69"/>
        <end position="84"/>
    </location>
</feature>
<organism>
    <name type="scientific">Bacillus subtilis (strain 168)</name>
    <dbReference type="NCBI Taxonomy" id="224308"/>
    <lineage>
        <taxon>Bacteria</taxon>
        <taxon>Bacillati</taxon>
        <taxon>Bacillota</taxon>
        <taxon>Bacilli</taxon>
        <taxon>Bacillales</taxon>
        <taxon>Bacillaceae</taxon>
        <taxon>Bacillus</taxon>
    </lineage>
</organism>
<protein>
    <recommendedName>
        <fullName evidence="3">Small ribosomal subunit protein bS20</fullName>
    </recommendedName>
    <alternativeName>
        <fullName>30S ribosomal protein S20</fullName>
        <shortName>BS20</shortName>
    </alternativeName>
</protein>
<dbReference type="EMBL" id="D84432">
    <property type="protein sequence ID" value="BAA12456.1"/>
    <property type="molecule type" value="Genomic_DNA"/>
</dbReference>
<dbReference type="EMBL" id="AL009126">
    <property type="protein sequence ID" value="CAB14497.2"/>
    <property type="molecule type" value="Genomic_DNA"/>
</dbReference>
<dbReference type="EMBL" id="M55263">
    <property type="status" value="NOT_ANNOTATED_CDS"/>
    <property type="molecule type" value="Genomic_DNA"/>
</dbReference>
<dbReference type="PIR" id="C69701">
    <property type="entry name" value="C69701"/>
</dbReference>
<dbReference type="RefSeq" id="NP_390433.2">
    <property type="nucleotide sequence ID" value="NC_000964.3"/>
</dbReference>
<dbReference type="RefSeq" id="WP_003229989.1">
    <property type="nucleotide sequence ID" value="NZ_OZ025638.1"/>
</dbReference>
<dbReference type="PDB" id="3J9W">
    <property type="method" value="EM"/>
    <property type="resolution" value="3.90 A"/>
    <property type="chains" value="AT=1-88"/>
</dbReference>
<dbReference type="PDB" id="5NJT">
    <property type="method" value="EM"/>
    <property type="resolution" value="3.80 A"/>
    <property type="chains" value="T=3-88"/>
</dbReference>
<dbReference type="PDB" id="6HA1">
    <property type="method" value="EM"/>
    <property type="resolution" value="3.10 A"/>
    <property type="chains" value="t=1-88"/>
</dbReference>
<dbReference type="PDB" id="6HA8">
    <property type="method" value="EM"/>
    <property type="resolution" value="3.50 A"/>
    <property type="chains" value="t=1-88"/>
</dbReference>
<dbReference type="PDB" id="6HTQ">
    <property type="method" value="EM"/>
    <property type="resolution" value="4.50 A"/>
    <property type="chains" value="t=4-86"/>
</dbReference>
<dbReference type="PDB" id="7O5B">
    <property type="method" value="EM"/>
    <property type="resolution" value="3.33 A"/>
    <property type="chains" value="T=1-88"/>
</dbReference>
<dbReference type="PDB" id="7QGU">
    <property type="method" value="EM"/>
    <property type="resolution" value="4.75 A"/>
    <property type="chains" value="y=1-88"/>
</dbReference>
<dbReference type="PDB" id="7QH4">
    <property type="method" value="EM"/>
    <property type="resolution" value="5.45 A"/>
    <property type="chains" value="x=1-88"/>
</dbReference>
<dbReference type="PDB" id="7QV1">
    <property type="method" value="EM"/>
    <property type="resolution" value="3.50 A"/>
    <property type="chains" value="t=1-88"/>
</dbReference>
<dbReference type="PDB" id="7QV2">
    <property type="method" value="EM"/>
    <property type="resolution" value="3.50 A"/>
    <property type="chains" value="t=1-88"/>
</dbReference>
<dbReference type="PDB" id="7QV3">
    <property type="method" value="EM"/>
    <property type="resolution" value="5.14 A"/>
    <property type="chains" value="t=1-88"/>
</dbReference>
<dbReference type="PDB" id="8BUU">
    <property type="method" value="EM"/>
    <property type="resolution" value="2.90 A"/>
    <property type="chains" value="t=1-88"/>
</dbReference>
<dbReference type="PDB" id="8CDU">
    <property type="method" value="EM"/>
    <property type="resolution" value="3.10 A"/>
    <property type="chains" value="S=1-88"/>
</dbReference>
<dbReference type="PDB" id="8CDV">
    <property type="method" value="EM"/>
    <property type="resolution" value="4.73 A"/>
    <property type="chains" value="S=1-88"/>
</dbReference>
<dbReference type="PDB" id="8CEC">
    <property type="method" value="EM"/>
    <property type="resolution" value="3.57 A"/>
    <property type="chains" value="S=1-88"/>
</dbReference>
<dbReference type="PDB" id="8CED">
    <property type="method" value="EM"/>
    <property type="resolution" value="4.15 A"/>
    <property type="chains" value="S=1-88"/>
</dbReference>
<dbReference type="PDB" id="8CEE">
    <property type="method" value="EM"/>
    <property type="resolution" value="3.70 A"/>
    <property type="chains" value="S=1-88"/>
</dbReference>
<dbReference type="PDB" id="8QCQ">
    <property type="method" value="EM"/>
    <property type="resolution" value="2.30 A"/>
    <property type="chains" value="t=1-88"/>
</dbReference>
<dbReference type="PDB" id="8QPP">
    <property type="method" value="EM"/>
    <property type="resolution" value="3.40 A"/>
    <property type="chains" value="T=1-88"/>
</dbReference>
<dbReference type="PDB" id="8R55">
    <property type="method" value="EM"/>
    <property type="resolution" value="3.57 A"/>
    <property type="chains" value="T=1-88"/>
</dbReference>
<dbReference type="PDBsum" id="3J9W"/>
<dbReference type="PDBsum" id="5NJT"/>
<dbReference type="PDBsum" id="6HA1"/>
<dbReference type="PDBsum" id="6HA8"/>
<dbReference type="PDBsum" id="6HTQ"/>
<dbReference type="PDBsum" id="7O5B"/>
<dbReference type="PDBsum" id="7QGU"/>
<dbReference type="PDBsum" id="7QH4"/>
<dbReference type="PDBsum" id="7QV1"/>
<dbReference type="PDBsum" id="7QV2"/>
<dbReference type="PDBsum" id="7QV3"/>
<dbReference type="PDBsum" id="8BUU"/>
<dbReference type="PDBsum" id="8CDU"/>
<dbReference type="PDBsum" id="8CDV"/>
<dbReference type="PDBsum" id="8CEC"/>
<dbReference type="PDBsum" id="8CED"/>
<dbReference type="PDBsum" id="8CEE"/>
<dbReference type="PDBsum" id="8QCQ"/>
<dbReference type="PDBsum" id="8QPP"/>
<dbReference type="PDBsum" id="8R55"/>
<dbReference type="EMDB" id="EMD-0176"/>
<dbReference type="EMDB" id="EMD-0177"/>
<dbReference type="EMDB" id="EMD-0270"/>
<dbReference type="EMDB" id="EMD-12734"/>
<dbReference type="EMDB" id="EMD-14157"/>
<dbReference type="EMDB" id="EMD-14158"/>
<dbReference type="EMDB" id="EMD-14159"/>
<dbReference type="EMDB" id="EMD-16246"/>
<dbReference type="EMDB" id="EMD-16595"/>
<dbReference type="EMDB" id="EMD-16596"/>
<dbReference type="EMDB" id="EMD-16605"/>
<dbReference type="EMDB" id="EMD-16606"/>
<dbReference type="EMDB" id="EMD-16607"/>
<dbReference type="EMDB" id="EMD-18332"/>
<dbReference type="EMDB" id="EMD-3656"/>
<dbReference type="SMR" id="P21477"/>
<dbReference type="FunCoup" id="P21477">
    <property type="interactions" value="457"/>
</dbReference>
<dbReference type="STRING" id="224308.BSU25550"/>
<dbReference type="jPOST" id="P21477"/>
<dbReference type="PaxDb" id="224308-BSU25550"/>
<dbReference type="EnsemblBacteria" id="CAB14497">
    <property type="protein sequence ID" value="CAB14497"/>
    <property type="gene ID" value="BSU_25550"/>
</dbReference>
<dbReference type="GeneID" id="86872896"/>
<dbReference type="GeneID" id="937837"/>
<dbReference type="KEGG" id="bsu:BSU25550"/>
<dbReference type="PATRIC" id="fig|224308.179.peg.2776"/>
<dbReference type="eggNOG" id="COG0268">
    <property type="taxonomic scope" value="Bacteria"/>
</dbReference>
<dbReference type="InParanoid" id="P21477"/>
<dbReference type="OrthoDB" id="9808392at2"/>
<dbReference type="PhylomeDB" id="P21477"/>
<dbReference type="BioCyc" id="BSUB:BSU25550-MONOMER"/>
<dbReference type="PRO" id="PR:P21477"/>
<dbReference type="Proteomes" id="UP000001570">
    <property type="component" value="Chromosome"/>
</dbReference>
<dbReference type="GO" id="GO:0005829">
    <property type="term" value="C:cytosol"/>
    <property type="evidence" value="ECO:0000318"/>
    <property type="project" value="GO_Central"/>
</dbReference>
<dbReference type="GO" id="GO:0015935">
    <property type="term" value="C:small ribosomal subunit"/>
    <property type="evidence" value="ECO:0000318"/>
    <property type="project" value="GO_Central"/>
</dbReference>
<dbReference type="GO" id="GO:0070181">
    <property type="term" value="F:small ribosomal subunit rRNA binding"/>
    <property type="evidence" value="ECO:0000318"/>
    <property type="project" value="GO_Central"/>
</dbReference>
<dbReference type="GO" id="GO:0003735">
    <property type="term" value="F:structural constituent of ribosome"/>
    <property type="evidence" value="ECO:0007669"/>
    <property type="project" value="InterPro"/>
</dbReference>
<dbReference type="GO" id="GO:0006412">
    <property type="term" value="P:translation"/>
    <property type="evidence" value="ECO:0007669"/>
    <property type="project" value="UniProtKB-UniRule"/>
</dbReference>
<dbReference type="FunFam" id="1.20.58.110:FF:000001">
    <property type="entry name" value="30S ribosomal protein S20"/>
    <property type="match status" value="1"/>
</dbReference>
<dbReference type="Gene3D" id="1.20.58.110">
    <property type="entry name" value="Ribosomal protein S20"/>
    <property type="match status" value="1"/>
</dbReference>
<dbReference type="HAMAP" id="MF_00500">
    <property type="entry name" value="Ribosomal_bS20"/>
    <property type="match status" value="1"/>
</dbReference>
<dbReference type="InterPro" id="IPR002583">
    <property type="entry name" value="Ribosomal_bS20"/>
</dbReference>
<dbReference type="InterPro" id="IPR036510">
    <property type="entry name" value="Ribosomal_bS20_sf"/>
</dbReference>
<dbReference type="NCBIfam" id="TIGR00029">
    <property type="entry name" value="S20"/>
    <property type="match status" value="1"/>
</dbReference>
<dbReference type="PANTHER" id="PTHR33398">
    <property type="entry name" value="30S RIBOSOMAL PROTEIN S20"/>
    <property type="match status" value="1"/>
</dbReference>
<dbReference type="PANTHER" id="PTHR33398:SF1">
    <property type="entry name" value="SMALL RIBOSOMAL SUBUNIT PROTEIN BS20C"/>
    <property type="match status" value="1"/>
</dbReference>
<dbReference type="Pfam" id="PF01649">
    <property type="entry name" value="Ribosomal_S20p"/>
    <property type="match status" value="1"/>
</dbReference>
<dbReference type="SUPFAM" id="SSF46992">
    <property type="entry name" value="Ribosomal protein S20"/>
    <property type="match status" value="1"/>
</dbReference>
<proteinExistence type="evidence at protein level"/>
<gene>
    <name type="primary">rpsT</name>
    <name type="synonym">yqeO</name>
    <name type="ordered locus">BSU25550</name>
</gene>
<reference key="1">
    <citation type="journal article" date="1996" name="Microbiology">
        <title>Systematic sequencing of the 283 kb 210 degrees-232 degrees region of the Bacillus subtilis genome containing the skin element and many sporulation genes.</title>
        <authorList>
            <person name="Mizuno M."/>
            <person name="Masuda S."/>
            <person name="Takemaru K."/>
            <person name="Hosono S."/>
            <person name="Sato T."/>
            <person name="Takeuchi M."/>
            <person name="Kobayashi Y."/>
        </authorList>
    </citation>
    <scope>NUCLEOTIDE SEQUENCE [GENOMIC DNA]</scope>
    <source>
        <strain>168 / JH642</strain>
    </source>
</reference>
<reference key="2">
    <citation type="journal article" date="1997" name="Nature">
        <title>The complete genome sequence of the Gram-positive bacterium Bacillus subtilis.</title>
        <authorList>
            <person name="Kunst F."/>
            <person name="Ogasawara N."/>
            <person name="Moszer I."/>
            <person name="Albertini A.M."/>
            <person name="Alloni G."/>
            <person name="Azevedo V."/>
            <person name="Bertero M.G."/>
            <person name="Bessieres P."/>
            <person name="Bolotin A."/>
            <person name="Borchert S."/>
            <person name="Borriss R."/>
            <person name="Boursier L."/>
            <person name="Brans A."/>
            <person name="Braun M."/>
            <person name="Brignell S.C."/>
            <person name="Bron S."/>
            <person name="Brouillet S."/>
            <person name="Bruschi C.V."/>
            <person name="Caldwell B."/>
            <person name="Capuano V."/>
            <person name="Carter N.M."/>
            <person name="Choi S.-K."/>
            <person name="Codani J.-J."/>
            <person name="Connerton I.F."/>
            <person name="Cummings N.J."/>
            <person name="Daniel R.A."/>
            <person name="Denizot F."/>
            <person name="Devine K.M."/>
            <person name="Duesterhoeft A."/>
            <person name="Ehrlich S.D."/>
            <person name="Emmerson P.T."/>
            <person name="Entian K.-D."/>
            <person name="Errington J."/>
            <person name="Fabret C."/>
            <person name="Ferrari E."/>
            <person name="Foulger D."/>
            <person name="Fritz C."/>
            <person name="Fujita M."/>
            <person name="Fujita Y."/>
            <person name="Fuma S."/>
            <person name="Galizzi A."/>
            <person name="Galleron N."/>
            <person name="Ghim S.-Y."/>
            <person name="Glaser P."/>
            <person name="Goffeau A."/>
            <person name="Golightly E.J."/>
            <person name="Grandi G."/>
            <person name="Guiseppi G."/>
            <person name="Guy B.J."/>
            <person name="Haga K."/>
            <person name="Haiech J."/>
            <person name="Harwood C.R."/>
            <person name="Henaut A."/>
            <person name="Hilbert H."/>
            <person name="Holsappel S."/>
            <person name="Hosono S."/>
            <person name="Hullo M.-F."/>
            <person name="Itaya M."/>
            <person name="Jones L.-M."/>
            <person name="Joris B."/>
            <person name="Karamata D."/>
            <person name="Kasahara Y."/>
            <person name="Klaerr-Blanchard M."/>
            <person name="Klein C."/>
            <person name="Kobayashi Y."/>
            <person name="Koetter P."/>
            <person name="Koningstein G."/>
            <person name="Krogh S."/>
            <person name="Kumano M."/>
            <person name="Kurita K."/>
            <person name="Lapidus A."/>
            <person name="Lardinois S."/>
            <person name="Lauber J."/>
            <person name="Lazarevic V."/>
            <person name="Lee S.-M."/>
            <person name="Levine A."/>
            <person name="Liu H."/>
            <person name="Masuda S."/>
            <person name="Mauel C."/>
            <person name="Medigue C."/>
            <person name="Medina N."/>
            <person name="Mellado R.P."/>
            <person name="Mizuno M."/>
            <person name="Moestl D."/>
            <person name="Nakai S."/>
            <person name="Noback M."/>
            <person name="Noone D."/>
            <person name="O'Reilly M."/>
            <person name="Ogawa K."/>
            <person name="Ogiwara A."/>
            <person name="Oudega B."/>
            <person name="Park S.-H."/>
            <person name="Parro V."/>
            <person name="Pohl T.M."/>
            <person name="Portetelle D."/>
            <person name="Porwollik S."/>
            <person name="Prescott A.M."/>
            <person name="Presecan E."/>
            <person name="Pujic P."/>
            <person name="Purnelle B."/>
            <person name="Rapoport G."/>
            <person name="Rey M."/>
            <person name="Reynolds S."/>
            <person name="Rieger M."/>
            <person name="Rivolta C."/>
            <person name="Rocha E."/>
            <person name="Roche B."/>
            <person name="Rose M."/>
            <person name="Sadaie Y."/>
            <person name="Sato T."/>
            <person name="Scanlan E."/>
            <person name="Schleich S."/>
            <person name="Schroeter R."/>
            <person name="Scoffone F."/>
            <person name="Sekiguchi J."/>
            <person name="Sekowska A."/>
            <person name="Seror S.J."/>
            <person name="Serror P."/>
            <person name="Shin B.-S."/>
            <person name="Soldo B."/>
            <person name="Sorokin A."/>
            <person name="Tacconi E."/>
            <person name="Takagi T."/>
            <person name="Takahashi H."/>
            <person name="Takemaru K."/>
            <person name="Takeuchi M."/>
            <person name="Tamakoshi A."/>
            <person name="Tanaka T."/>
            <person name="Terpstra P."/>
            <person name="Tognoni A."/>
            <person name="Tosato V."/>
            <person name="Uchiyama S."/>
            <person name="Vandenbol M."/>
            <person name="Vannier F."/>
            <person name="Vassarotti A."/>
            <person name="Viari A."/>
            <person name="Wambutt R."/>
            <person name="Wedler E."/>
            <person name="Wedler H."/>
            <person name="Weitzenegger T."/>
            <person name="Winters P."/>
            <person name="Wipat A."/>
            <person name="Yamamoto H."/>
            <person name="Yamane K."/>
            <person name="Yasumoto K."/>
            <person name="Yata K."/>
            <person name="Yoshida K."/>
            <person name="Yoshikawa H.-F."/>
            <person name="Zumstein E."/>
            <person name="Yoshikawa H."/>
            <person name="Danchin A."/>
        </authorList>
    </citation>
    <scope>NUCLEOTIDE SEQUENCE [LARGE SCALE GENOMIC DNA]</scope>
    <source>
        <strain>168</strain>
    </source>
</reference>
<reference key="3">
    <citation type="journal article" date="2009" name="Microbiology">
        <title>From a consortium sequence to a unified sequence: the Bacillus subtilis 168 reference genome a decade later.</title>
        <authorList>
            <person name="Barbe V."/>
            <person name="Cruveiller S."/>
            <person name="Kunst F."/>
            <person name="Lenoble P."/>
            <person name="Meurice G."/>
            <person name="Sekowska A."/>
            <person name="Vallenet D."/>
            <person name="Wang T."/>
            <person name="Moszer I."/>
            <person name="Medigue C."/>
            <person name="Danchin A."/>
        </authorList>
    </citation>
    <scope>SEQUENCE REVISION TO 18</scope>
</reference>
<reference key="4">
    <citation type="journal article" date="1982" name="Mol. Gen. Genet.">
        <title>Purification and characterization of 30S ribosomal proteins from Bacillus subtilis: correlation to Escherichia coli 30S proteins.</title>
        <authorList>
            <person name="Higo K."/>
            <person name="Otaka E."/>
            <person name="Osawa S."/>
        </authorList>
    </citation>
    <scope>PROTEIN SEQUENCE OF 2-31</scope>
</reference>
<reference key="5">
    <citation type="journal article" date="1991" name="J. Bacteriol.">
        <title>Cloning, nucleotide sequence, and regulation of the Bacillus subtilis gpr gene, which codes for the protease that initiates degradation of small, acid-soluble proteins during spore germination.</title>
        <authorList>
            <person name="Sussman M.D."/>
            <person name="Setlow P."/>
        </authorList>
    </citation>
    <scope>NUCLEOTIDE SEQUENCE [GENOMIC DNA] OF 1-15</scope>
    <source>
        <strain>168</strain>
    </source>
</reference>
<reference evidence="4 5" key="6">
    <citation type="journal article" date="2018" name="Proc. Natl. Acad. Sci. U.S.A.">
        <title>Structural basis for antibiotic resistance mediated by the Bacillus subtilis ABCF ATPase VmlR.</title>
        <authorList>
            <person name="Crowe-McAuliffe C."/>
            <person name="Graf M."/>
            <person name="Huter P."/>
            <person name="Takada H."/>
            <person name="Abdelshahid M."/>
            <person name="Novacek J."/>
            <person name="Murina V."/>
            <person name="Atkinson G.C."/>
            <person name="Hauryliuk V."/>
            <person name="Wilson D.N."/>
        </authorList>
    </citation>
    <scope>STRUCTURE BY ELECTRON MICROSCOPY (3.10 ANGSTROMS) OF 1-88 WITH AND WITHOUT VIRGINIAMYCIN M</scope>
    <scope>SUBUNIT</scope>
</reference>
<keyword id="KW-0002">3D-structure</keyword>
<keyword id="KW-0903">Direct protein sequencing</keyword>
<keyword id="KW-1185">Reference proteome</keyword>
<keyword id="KW-0687">Ribonucleoprotein</keyword>
<keyword id="KW-0689">Ribosomal protein</keyword>
<keyword id="KW-0694">RNA-binding</keyword>
<keyword id="KW-0699">rRNA-binding</keyword>
<sequence length="88" mass="9599">MPNIKSAIKRTKTNNERRVHNATIKSAMRTAIKQVEASVANNEADKAKTALTEAAKRIDKAVKTGLVHKNTAARYKSRLAKKVNGLSA</sequence>